<accession>Q06596</accession>
<accession>D6W4J7</accession>
<reference key="1">
    <citation type="journal article" date="1997" name="Yeast">
        <title>Isolation of three contiguous genes, ACR1, ACR2 and ACR3, involved in resistance to arsenic compounds in the yeast Saccharomyces cerevisiae.</title>
        <authorList>
            <person name="Bobrowicz P."/>
            <person name="Wysocki R."/>
            <person name="Owsianik G."/>
            <person name="Goffeau A."/>
            <person name="Ulaszewski S."/>
        </authorList>
    </citation>
    <scope>NUCLEOTIDE SEQUENCE [GENOMIC DNA]</scope>
    <scope>FUNCTION</scope>
    <scope>DISRUPTION PHENOTYPE</scope>
</reference>
<reference key="2">
    <citation type="journal article" date="1997" name="Nature">
        <title>The nucleotide sequence of Saccharomyces cerevisiae chromosome XVI.</title>
        <authorList>
            <person name="Bussey H."/>
            <person name="Storms R.K."/>
            <person name="Ahmed A."/>
            <person name="Albermann K."/>
            <person name="Allen E."/>
            <person name="Ansorge W."/>
            <person name="Araujo R."/>
            <person name="Aparicio A."/>
            <person name="Barrell B.G."/>
            <person name="Badcock K."/>
            <person name="Benes V."/>
            <person name="Botstein D."/>
            <person name="Bowman S."/>
            <person name="Brueckner M."/>
            <person name="Carpenter J."/>
            <person name="Cherry J.M."/>
            <person name="Chung E."/>
            <person name="Churcher C.M."/>
            <person name="Coster F."/>
            <person name="Davis K."/>
            <person name="Davis R.W."/>
            <person name="Dietrich F.S."/>
            <person name="Delius H."/>
            <person name="DiPaolo T."/>
            <person name="Dubois E."/>
            <person name="Duesterhoeft A."/>
            <person name="Duncan M."/>
            <person name="Floeth M."/>
            <person name="Fortin N."/>
            <person name="Friesen J.D."/>
            <person name="Fritz C."/>
            <person name="Goffeau A."/>
            <person name="Hall J."/>
            <person name="Hebling U."/>
            <person name="Heumann K."/>
            <person name="Hilbert H."/>
            <person name="Hillier L.W."/>
            <person name="Hunicke-Smith S."/>
            <person name="Hyman R.W."/>
            <person name="Johnston M."/>
            <person name="Kalman S."/>
            <person name="Kleine K."/>
            <person name="Komp C."/>
            <person name="Kurdi O."/>
            <person name="Lashkari D."/>
            <person name="Lew H."/>
            <person name="Lin A."/>
            <person name="Lin D."/>
            <person name="Louis E.J."/>
            <person name="Marathe R."/>
            <person name="Messenguy F."/>
            <person name="Mewes H.-W."/>
            <person name="Mirtipati S."/>
            <person name="Moestl D."/>
            <person name="Mueller-Auer S."/>
            <person name="Namath A."/>
            <person name="Nentwich U."/>
            <person name="Oefner P."/>
            <person name="Pearson D."/>
            <person name="Petel F.X."/>
            <person name="Pohl T.M."/>
            <person name="Purnelle B."/>
            <person name="Rajandream M.A."/>
            <person name="Rechmann S."/>
            <person name="Rieger M."/>
            <person name="Riles L."/>
            <person name="Roberts D."/>
            <person name="Schaefer M."/>
            <person name="Scharfe M."/>
            <person name="Scherens B."/>
            <person name="Schramm S."/>
            <person name="Schroeder M."/>
            <person name="Sdicu A.-M."/>
            <person name="Tettelin H."/>
            <person name="Urrestarazu L.A."/>
            <person name="Ushinsky S."/>
            <person name="Vierendeels F."/>
            <person name="Vissers S."/>
            <person name="Voss H."/>
            <person name="Walsh S.V."/>
            <person name="Wambutt R."/>
            <person name="Wang Y."/>
            <person name="Wedler E."/>
            <person name="Wedler H."/>
            <person name="Winnett E."/>
            <person name="Zhong W.-W."/>
            <person name="Zollner A."/>
            <person name="Vo D.H."/>
            <person name="Hani J."/>
        </authorList>
    </citation>
    <scope>NUCLEOTIDE SEQUENCE [LARGE SCALE GENOMIC DNA]</scope>
    <source>
        <strain>ATCC 204508 / S288c</strain>
    </source>
</reference>
<reference key="3">
    <citation type="journal article" date="2014" name="G3 (Bethesda)">
        <title>The reference genome sequence of Saccharomyces cerevisiae: Then and now.</title>
        <authorList>
            <person name="Engel S.R."/>
            <person name="Dietrich F.S."/>
            <person name="Fisk D.G."/>
            <person name="Binkley G."/>
            <person name="Balakrishnan R."/>
            <person name="Costanzo M.C."/>
            <person name="Dwight S.S."/>
            <person name="Hitz B.C."/>
            <person name="Karra K."/>
            <person name="Nash R.S."/>
            <person name="Weng S."/>
            <person name="Wong E.D."/>
            <person name="Lloyd P."/>
            <person name="Skrzypek M.S."/>
            <person name="Miyasato S.R."/>
            <person name="Simison M."/>
            <person name="Cherry J.M."/>
        </authorList>
    </citation>
    <scope>GENOME REANNOTATION</scope>
    <source>
        <strain>ATCC 204508 / S288c</strain>
    </source>
</reference>
<reference key="4">
    <citation type="journal article" date="2007" name="Genome Res.">
        <title>Approaching a complete repository of sequence-verified protein-encoding clones for Saccharomyces cerevisiae.</title>
        <authorList>
            <person name="Hu Y."/>
            <person name="Rolfs A."/>
            <person name="Bhullar B."/>
            <person name="Murthy T.V.S."/>
            <person name="Zhu C."/>
            <person name="Berger M.F."/>
            <person name="Camargo A.A."/>
            <person name="Kelley F."/>
            <person name="McCarron S."/>
            <person name="Jepson D."/>
            <person name="Richardson A."/>
            <person name="Raphael J."/>
            <person name="Moreira D."/>
            <person name="Taycher E."/>
            <person name="Zuo D."/>
            <person name="Mohr S."/>
            <person name="Kane M.F."/>
            <person name="Williamson J."/>
            <person name="Simpson A.J.G."/>
            <person name="Bulyk M.L."/>
            <person name="Harlow E."/>
            <person name="Marsischky G."/>
            <person name="Kolodner R.D."/>
            <person name="LaBaer J."/>
        </authorList>
    </citation>
    <scope>NUCLEOTIDE SEQUENCE [GENOMIC DNA]</scope>
    <source>
        <strain>ATCC 204508 / S288c</strain>
    </source>
</reference>
<reference key="5">
    <citation type="journal article" date="1997" name="Mol. Cell. Biol.">
        <title>Yap, a novel family of eight bZIP proteins in Saccharomyces cerevisiae with distinct biological functions.</title>
        <authorList>
            <person name="Fernandes L."/>
            <person name="Rodrigues-Pousada C."/>
            <person name="Struhl K."/>
        </authorList>
    </citation>
    <scope>IDENTIFICATION</scope>
    <scope>DOMAIN</scope>
</reference>
<reference key="6">
    <citation type="journal article" date="2001" name="Biochem. Cell Biol.">
        <title>Yap1 overproduction restores arsenite resistance to the ABC transporter deficient mutant ycf1 by activating ACR3 expression.</title>
        <authorList>
            <person name="Bouganim N."/>
            <person name="David J."/>
            <person name="Wysocki R."/>
            <person name="Ramotar D."/>
        </authorList>
    </citation>
    <scope>FUNCTION</scope>
    <scope>DISRUPTION PHENOTYPE</scope>
</reference>
<reference key="7">
    <citation type="journal article" date="2001" name="Mol. Microbiol.">
        <title>The glycerol channel Fps1p mediates the uptake of arsenite and antimonite in Saccharomyces cerevisiae.</title>
        <authorList>
            <person name="Wysocki R."/>
            <person name="Chery C.C."/>
            <person name="Wawrzycka D."/>
            <person name="Van Hulle M."/>
            <person name="Cornelis R."/>
            <person name="Thevelein J.M."/>
            <person name="Tamas M.J."/>
        </authorList>
    </citation>
    <scope>FUNCTION</scope>
</reference>
<reference key="8">
    <citation type="journal article" date="2004" name="FEBS Lett.">
        <title>Yap8p activation in Saccharomyces cerevisiae under arsenic conditions.</title>
        <authorList>
            <person name="Menezes R.A."/>
            <person name="Amaral C."/>
            <person name="Delaunay A."/>
            <person name="Toledano M."/>
            <person name="Rodrigues-Pousada C."/>
        </authorList>
    </citation>
    <scope>FUNCTION</scope>
    <scope>DISRUPTION PHENOTYPE</scope>
    <scope>ACTIVITY REGULATION</scope>
    <scope>SUBCELLULAR LOCATION</scope>
    <scope>MUTAGENESIS OF CYS-132; CYS-137 AND CYS-274</scope>
</reference>
<reference key="9">
    <citation type="journal article" date="2007" name="J. Cell Sci.">
        <title>Regulation of the arsenic-responsive transcription factor Yap8p involves the ubiquitin-proteasome pathway.</title>
        <authorList>
            <person name="Di Y."/>
            <person name="Tamas M.J."/>
        </authorList>
    </citation>
    <scope>FUNCTION</scope>
    <scope>SUBUNIT</scope>
    <scope>ACTIVITY REGULATION</scope>
    <scope>MUTAGENESIS OF CYS-92; CYS-93; CYS-121; CYS-132; CYS-137 AND CYS-274</scope>
</reference>
<reference key="10">
    <citation type="journal article" date="2015" name="Mol. Cell. Biol.">
        <title>Arsenic directly binds to and activates the yeast AP-1-like transcription factor Yap8.</title>
        <authorList>
            <person name="Kumar N.V."/>
            <person name="Yang J."/>
            <person name="Pillai J.K."/>
            <person name="Rawat S."/>
            <person name="Solano C."/>
            <person name="Kumar A."/>
            <person name="Groetli M."/>
            <person name="Stemmler T.L."/>
            <person name="Rosen B.P."/>
            <person name="Tamas M.J."/>
        </authorList>
    </citation>
    <scope>FUNCTION</scope>
    <scope>ARSENIC-BINDING</scope>
    <scope>MUTAGENESIS OF CYS-132 AND CYS-274</scope>
</reference>
<reference key="11">
    <citation type="journal article" date="2019" name="Sci. Signal.">
        <title>Thiol-based direct threat sensing by the stress-activated protein kinase Hog1.</title>
        <authorList>
            <person name="Guerra-Moreno A."/>
            <person name="Prado M.A."/>
            <person name="Ang J."/>
            <person name="Schnell H.M."/>
            <person name="Micoogullari Y."/>
            <person name="Paulo J.A."/>
            <person name="Finley D."/>
            <person name="Gygi S.P."/>
            <person name="Hanna J."/>
        </authorList>
    </citation>
    <scope>PHOSPHORYLATION BY HOG1</scope>
    <scope>SUBCELLULAR LOCATION</scope>
    <scope>DISRUPTION PHENOTYPE</scope>
    <scope>FUNCTION</scope>
    <scope>MUTAGENESIS OF SER-14; THR-16; THR-138; SER-141; SER-145; SER-282 AND SER-292</scope>
</reference>
<protein>
    <recommendedName>
        <fullName evidence="9">Arsenical-resistance protein ARR1</fullName>
    </recommendedName>
    <alternativeName>
        <fullName evidence="11">AP-1-like transcription factor YAP8</fullName>
    </alternativeName>
    <alternativeName>
        <fullName evidence="10">Arsenic compound resistance protein 1</fullName>
    </alternativeName>
</protein>
<comment type="function">
    <text evidence="2 3 4 6 7 8">Transcription activator required for resistance to arsenic compounds and for a regulated expression of ACR2, ACR3 and YCF1.</text>
</comment>
<comment type="activity regulation">
    <text evidence="4 5">Transcriptional activity is controlled by regulated degradation by the ubiquitin-proteasome pathway in absence of arsenic (PubMed:17200139). Arsenic-exposure results in stabilization and increased transcriptional activity (PubMed:15147884, PubMed:17200139).</text>
</comment>
<comment type="subunit">
    <text evidence="5">Homodimer.</text>
</comment>
<comment type="subcellular location">
    <subcellularLocation>
        <location evidence="4">Cytoplasm</location>
    </subcellularLocation>
    <subcellularLocation>
        <location evidence="4 7">Nucleus</location>
    </subcellularLocation>
    <text evidence="4 7">Predominantly localized in the cytoplasm under non-stress conditions and redistributed into the nucleus after HOG1 phosphorylation in the presence of arsenic (PubMed:15147884, PubMed:31772124). The major karyopherinse CRM1 mediates nuclear export which is also regulated by arsenic stress (PubMed:15147884).</text>
</comment>
<comment type="PTM">
    <text evidence="7">Phosphorylation by HOG1 promotes nuclear localization in the presence of arsenic.</text>
</comment>
<comment type="disruption phenotype">
    <text evidence="3 4 8">Leads to hypersensitivity to arsenic (PubMed:9234670). Impairs the arsenic-dependent induction of arsenate reductase ARR2, arsenite transporter ARR3 and vacuolar transporter YCF1 (PubMed:11527213, PubMed:15147884).</text>
</comment>
<comment type="miscellaneous">
    <text evidence="13">One of 8 closely related fungi-specific YAP proteins (YAP1 to YAP8), which all seem to be transcription activators of the environmental stress response and metabolism control pathways and to have similar but not identical DNA binding specificities.</text>
</comment>
<comment type="similarity">
    <text evidence="12">Belongs to the bZIP family. YAP subfamily.</text>
</comment>
<name>ARR1_YEAST</name>
<gene>
    <name evidence="9" type="primary">ARR1</name>
    <name evidence="10" type="synonym">ACR1</name>
    <name evidence="11" type="synonym">YAP8</name>
    <name type="ordered locus">YPR199C</name>
    <name type="ORF">P9677.15</name>
</gene>
<proteinExistence type="evidence at protein level"/>
<feature type="chain" id="PRO_0000076528" description="Arsenical-resistance protein ARR1">
    <location>
        <begin position="1"/>
        <end position="294"/>
    </location>
</feature>
<feature type="domain" description="bZIP" evidence="14">
    <location>
        <begin position="22"/>
        <end position="72"/>
    </location>
</feature>
<feature type="region of interest" description="Disordered" evidence="1">
    <location>
        <begin position="1"/>
        <end position="29"/>
    </location>
</feature>
<feature type="region of interest" description="Basic motif" evidence="14">
    <location>
        <begin position="22"/>
        <end position="45"/>
    </location>
</feature>
<feature type="region of interest" description="Leucine-zipper" evidence="14">
    <location>
        <begin position="44"/>
        <end position="72"/>
    </location>
</feature>
<feature type="compositionally biased region" description="Basic residues" evidence="1">
    <location>
        <begin position="1"/>
        <end position="11"/>
    </location>
</feature>
<feature type="binding site" description="covalent" evidence="6">
    <location>
        <position position="132"/>
    </location>
    <ligand>
        <name>arsenite</name>
        <dbReference type="ChEBI" id="CHEBI:29242"/>
    </ligand>
</feature>
<feature type="binding site" description="covalent" evidence="6">
    <location>
        <position position="137"/>
    </location>
    <ligand>
        <name>arsenite</name>
        <dbReference type="ChEBI" id="CHEBI:29242"/>
    </ligand>
</feature>
<feature type="binding site" description="covalent" evidence="6">
    <location>
        <position position="274"/>
    </location>
    <ligand>
        <name>arsenite</name>
        <dbReference type="ChEBI" id="CHEBI:29242"/>
    </ligand>
</feature>
<feature type="mutagenesis site" description="Impairs largely arsenic-induced phosphorylation, shows strong sensitivity to arsenic treatment and a strong, although not complete, reduction in arsenite-induced expression of ARR2 and ARR3; when associated with A-16, A-138, A-141, A-145, A-282 and A-292." evidence="7">
    <original>S</original>
    <variation>A</variation>
    <location>
        <position position="14"/>
    </location>
</feature>
<feature type="mutagenesis site" description="Impairs largely arsenic-induced phosphorylation, shows strong sensitivity to arsenic treatment and a strong, although not complete, reduction in arsenite-induced expression of ARR2 and ARR3; when associated with A-14, A-138, A-141, A-145, A-282 and A-292." evidence="7">
    <original>T</original>
    <variation>A</variation>
    <location>
        <position position="16"/>
    </location>
</feature>
<feature type="mutagenesis site" description="Retains about 60% of activity; when assocoated with A-93." evidence="5">
    <original>C</original>
    <variation>A</variation>
    <location>
        <position position="92"/>
    </location>
</feature>
<feature type="mutagenesis site" description="Retains about 60% of activity; when assocoated with A-92." evidence="5">
    <original>C</original>
    <variation>A</variation>
    <location>
        <position position="93"/>
    </location>
</feature>
<feature type="mutagenesis site" description="Retains about 60% of activity." evidence="5">
    <original>C</original>
    <variation>A</variation>
    <location>
        <position position="121"/>
    </location>
</feature>
<feature type="mutagenesis site" description="Impairs nuclear relocalization in response to arsenic and transcriptional activity, and leads to arsenic hypersensitivity. Loses most of the arsenic-binding capacity; when assciated with A-274." evidence="4 5 6">
    <original>C</original>
    <variation>A</variation>
    <location>
        <position position="132"/>
    </location>
</feature>
<feature type="mutagenesis site" description="Impairs nuclear relocalization in response to arsenic and transcriptional activity, and leads to arsenic hypersensitivity." evidence="4 5">
    <original>C</original>
    <variation>A</variation>
    <location>
        <position position="137"/>
    </location>
</feature>
<feature type="mutagenesis site" description="Impairs largely arsenic-induced phosphorylation, shows strong sensitivity to arsenic treatment and a strong, although not complete, reduction in arsenite-induced expression of ARR2 and ARR3; when associated with A-14, A-16, A-141, A-145, A-282 and A-292." evidence="7">
    <original>T</original>
    <variation>A</variation>
    <location>
        <position position="138"/>
    </location>
</feature>
<feature type="mutagenesis site" description="Impairs largely arsenic-induced phosphorylation, shows strong sensitivity to arsenic treatment and a strong, although not complete, reduction in arsenite-induced expression of ARR2 and ARR3; when associated with A-14, A-16, A-138, A-145, A-282 and A-292." evidence="7">
    <original>S</original>
    <variation>A</variation>
    <location>
        <position position="141"/>
    </location>
</feature>
<feature type="mutagenesis site" description="Impairs largely arsenic-induced phosphorylation, shows strong sensitivity to arsenic treatment and a strong, although not complete, reduction in arsenite-induced expression of ARR2 and ARR3; when associated with A-14, A-16, A-138, A-141, A-282 and A-292." evidence="7">
    <original>S</original>
    <variation>A</variation>
    <location>
        <position position="145"/>
    </location>
</feature>
<feature type="mutagenesis site" description="Impairs nuclear relocalization in response to arsenic and transcriptional activity, and leads to arsenic hypersensitivity. Loses most of the arsenic-binding capacity; when assciated with A-274." evidence="4 5 6">
    <original>C</original>
    <variation>A</variation>
    <location>
        <position position="274"/>
    </location>
</feature>
<feature type="mutagenesis site" description="Impairs largely arsenic-induced phosphorylation, shows strong sensitivity to arsenic treatment and a strong, although not complete, reduction in arsenite-induced expression of ARR2 and ARR3; when associated with A-14, A-16, A-138, A-141, A-145 and A-292." evidence="7">
    <original>S</original>
    <variation>A</variation>
    <location>
        <position position="282"/>
    </location>
</feature>
<feature type="mutagenesis site" description="Impairs largely arsenic-induced phosphorylation, shows strong sensitivity to arsenic treatment and a strong, although not complete, reduction in arsenite-induced expression of ARR2 and ARR3; when associated with A-14, A-16, A-138, A-141, A-145 and A-282." evidence="7">
    <original>S</original>
    <variation>A</variation>
    <location>
        <position position="292"/>
    </location>
</feature>
<evidence type="ECO:0000256" key="1">
    <source>
        <dbReference type="SAM" id="MobiDB-lite"/>
    </source>
</evidence>
<evidence type="ECO:0000269" key="2">
    <source>
    </source>
</evidence>
<evidence type="ECO:0000269" key="3">
    <source>
    </source>
</evidence>
<evidence type="ECO:0000269" key="4">
    <source>
    </source>
</evidence>
<evidence type="ECO:0000269" key="5">
    <source>
    </source>
</evidence>
<evidence type="ECO:0000269" key="6">
    <source>
    </source>
</evidence>
<evidence type="ECO:0000269" key="7">
    <source>
    </source>
</evidence>
<evidence type="ECO:0000269" key="8">
    <source>
    </source>
</evidence>
<evidence type="ECO:0000303" key="9">
    <source>
    </source>
</evidence>
<evidence type="ECO:0000303" key="10">
    <source>
    </source>
</evidence>
<evidence type="ECO:0000303" key="11">
    <source>
    </source>
</evidence>
<evidence type="ECO:0000305" key="12"/>
<evidence type="ECO:0000305" key="13">
    <source>
    </source>
</evidence>
<evidence type="ECO:0000305" key="14">
    <source>
    </source>
</evidence>
<dbReference type="EMBL" id="U25841">
    <property type="protein sequence ID" value="AAB64627.1"/>
    <property type="molecule type" value="Genomic_DNA"/>
</dbReference>
<dbReference type="EMBL" id="AY558064">
    <property type="protein sequence ID" value="AAS56390.1"/>
    <property type="molecule type" value="Genomic_DNA"/>
</dbReference>
<dbReference type="EMBL" id="BK006949">
    <property type="protein sequence ID" value="DAA11613.1"/>
    <property type="molecule type" value="Genomic_DNA"/>
</dbReference>
<dbReference type="PIR" id="S58828">
    <property type="entry name" value="S58828"/>
</dbReference>
<dbReference type="RefSeq" id="NP_015525.1">
    <property type="nucleotide sequence ID" value="NM_001184296.1"/>
</dbReference>
<dbReference type="SMR" id="Q06596"/>
<dbReference type="BioGRID" id="36369">
    <property type="interactions" value="75"/>
</dbReference>
<dbReference type="DIP" id="DIP-4388N"/>
<dbReference type="FunCoup" id="Q06596">
    <property type="interactions" value="1080"/>
</dbReference>
<dbReference type="STRING" id="4932.YPR199C"/>
<dbReference type="PaxDb" id="4932-YPR199C"/>
<dbReference type="EnsemblFungi" id="YPR199C_mRNA">
    <property type="protein sequence ID" value="YPR199C"/>
    <property type="gene ID" value="YPR199C"/>
</dbReference>
<dbReference type="GeneID" id="856329"/>
<dbReference type="KEGG" id="sce:YPR199C"/>
<dbReference type="AGR" id="SGD:S000006403"/>
<dbReference type="SGD" id="S000006403">
    <property type="gene designation" value="ARR1"/>
</dbReference>
<dbReference type="VEuPathDB" id="FungiDB:YPR199C"/>
<dbReference type="eggNOG" id="ENOG502SVNC">
    <property type="taxonomic scope" value="Eukaryota"/>
</dbReference>
<dbReference type="HOGENOM" id="CLU_947336_0_0_1"/>
<dbReference type="InParanoid" id="Q06596"/>
<dbReference type="OMA" id="YRERRIN"/>
<dbReference type="OrthoDB" id="4056575at2759"/>
<dbReference type="BioCyc" id="YEAST:G3O-34319-MONOMER"/>
<dbReference type="BioGRID-ORCS" id="856329">
    <property type="hits" value="1 hit in 10 CRISPR screens"/>
</dbReference>
<dbReference type="PRO" id="PR:Q06596"/>
<dbReference type="Proteomes" id="UP000002311">
    <property type="component" value="Chromosome XVI"/>
</dbReference>
<dbReference type="RNAct" id="Q06596">
    <property type="molecule type" value="protein"/>
</dbReference>
<dbReference type="GO" id="GO:0005737">
    <property type="term" value="C:cytoplasm"/>
    <property type="evidence" value="ECO:0000314"/>
    <property type="project" value="SGD"/>
</dbReference>
<dbReference type="GO" id="GO:0005634">
    <property type="term" value="C:nucleus"/>
    <property type="evidence" value="ECO:0000314"/>
    <property type="project" value="SGD"/>
</dbReference>
<dbReference type="GO" id="GO:0090575">
    <property type="term" value="C:RNA polymerase II transcription regulator complex"/>
    <property type="evidence" value="ECO:0000318"/>
    <property type="project" value="GO_Central"/>
</dbReference>
<dbReference type="GO" id="GO:0003677">
    <property type="term" value="F:DNA binding"/>
    <property type="evidence" value="ECO:0000314"/>
    <property type="project" value="SGD"/>
</dbReference>
<dbReference type="GO" id="GO:0001228">
    <property type="term" value="F:DNA-binding transcription activator activity, RNA polymerase II-specific"/>
    <property type="evidence" value="ECO:0000314"/>
    <property type="project" value="SGD"/>
</dbReference>
<dbReference type="GO" id="GO:0000978">
    <property type="term" value="F:RNA polymerase II cis-regulatory region sequence-specific DNA binding"/>
    <property type="evidence" value="ECO:0000314"/>
    <property type="project" value="SGD"/>
</dbReference>
<dbReference type="GO" id="GO:0000976">
    <property type="term" value="F:transcription cis-regulatory region binding"/>
    <property type="evidence" value="ECO:0000318"/>
    <property type="project" value="GO_Central"/>
</dbReference>
<dbReference type="GO" id="GO:0071243">
    <property type="term" value="P:cellular response to arsenic-containing substance"/>
    <property type="evidence" value="ECO:0000315"/>
    <property type="project" value="SGD"/>
</dbReference>
<dbReference type="GO" id="GO:0045944">
    <property type="term" value="P:positive regulation of transcription by RNA polymerase II"/>
    <property type="evidence" value="ECO:0000315"/>
    <property type="project" value="SGD"/>
</dbReference>
<dbReference type="FunFam" id="1.20.5.170:FF:000139">
    <property type="entry name" value="Arr1p"/>
    <property type="match status" value="1"/>
</dbReference>
<dbReference type="Gene3D" id="1.20.5.170">
    <property type="match status" value="1"/>
</dbReference>
<dbReference type="Gene3D" id="1.10.238.100">
    <property type="entry name" value="YAP1 redox domain. Chain B"/>
    <property type="match status" value="1"/>
</dbReference>
<dbReference type="InterPro" id="IPR050936">
    <property type="entry name" value="AP-1-like"/>
</dbReference>
<dbReference type="InterPro" id="IPR046347">
    <property type="entry name" value="bZIP_sf"/>
</dbReference>
<dbReference type="InterPro" id="IPR023167">
    <property type="entry name" value="Yap1_redox_dom_sf"/>
</dbReference>
<dbReference type="PANTHER" id="PTHR40621:SF6">
    <property type="entry name" value="AP-1-LIKE TRANSCRIPTION FACTOR YAP1-RELATED"/>
    <property type="match status" value="1"/>
</dbReference>
<dbReference type="PANTHER" id="PTHR40621">
    <property type="entry name" value="TRANSCRIPTION FACTOR KAPC-RELATED"/>
    <property type="match status" value="1"/>
</dbReference>
<dbReference type="SUPFAM" id="SSF57959">
    <property type="entry name" value="Leucine zipper domain"/>
    <property type="match status" value="1"/>
</dbReference>
<dbReference type="SUPFAM" id="SSF111430">
    <property type="entry name" value="YAP1 redox domain"/>
    <property type="match status" value="1"/>
</dbReference>
<sequence length="294" mass="33227">MAKPRGRKGGRKPSLTPPKNKRAAQLRASQNAFRKRKLERLEELEKKEAQLTVTNDQIHILKKENELLHFMLRSLLTERNMPSDERNISKACCEEKPPTCNTLDGSVVLSSTYNSLEIQQCYVFFKQLLSVCVGKNCTVPSPLNSFDRSFYPIGCTNLSNDIPGYSFLNDAMSEIHTFGDFNGELDSTFLEFSGTEIKEPNNFITENTNAIETAAASMVIRQGFHPRQYYTVDAFGGDVLLSAMDIWSFMKVHPKVNTFDLEILGTELKKSATCSNFDILISLKHFIKVFSSKL</sequence>
<keyword id="KW-0010">Activator</keyword>
<keyword id="KW-0059">Arsenical resistance</keyword>
<keyword id="KW-0963">Cytoplasm</keyword>
<keyword id="KW-0238">DNA-binding</keyword>
<keyword id="KW-0539">Nucleus</keyword>
<keyword id="KW-1185">Reference proteome</keyword>
<keyword id="KW-0804">Transcription</keyword>
<keyword id="KW-0805">Transcription regulation</keyword>
<organism>
    <name type="scientific">Saccharomyces cerevisiae (strain ATCC 204508 / S288c)</name>
    <name type="common">Baker's yeast</name>
    <dbReference type="NCBI Taxonomy" id="559292"/>
    <lineage>
        <taxon>Eukaryota</taxon>
        <taxon>Fungi</taxon>
        <taxon>Dikarya</taxon>
        <taxon>Ascomycota</taxon>
        <taxon>Saccharomycotina</taxon>
        <taxon>Saccharomycetes</taxon>
        <taxon>Saccharomycetales</taxon>
        <taxon>Saccharomycetaceae</taxon>
        <taxon>Saccharomyces</taxon>
    </lineage>
</organism>